<proteinExistence type="inferred from homology"/>
<keyword id="KW-0030">Aminoacyl-tRNA synthetase</keyword>
<keyword id="KW-0067">ATP-binding</keyword>
<keyword id="KW-0963">Cytoplasm</keyword>
<keyword id="KW-0436">Ligase</keyword>
<keyword id="KW-0547">Nucleotide-binding</keyword>
<keyword id="KW-0648">Protein biosynthesis</keyword>
<keyword id="KW-1185">Reference proteome</keyword>
<feature type="chain" id="PRO_0000136127" description="Histidine--tRNA ligase">
    <location>
        <begin position="1"/>
        <end position="425"/>
    </location>
</feature>
<reference key="1">
    <citation type="journal article" date="2003" name="Proc. Natl. Acad. Sci. U.S.A.">
        <title>Reductive genome evolution in Buchnera aphidicola.</title>
        <authorList>
            <person name="van Ham R.C.H.J."/>
            <person name="Kamerbeek J."/>
            <person name="Palacios C."/>
            <person name="Rausell C."/>
            <person name="Abascal F."/>
            <person name="Bastolla U."/>
            <person name="Fernandez J.M."/>
            <person name="Jimenez L."/>
            <person name="Postigo M."/>
            <person name="Silva F.J."/>
            <person name="Tamames J."/>
            <person name="Viguera E."/>
            <person name="Latorre A."/>
            <person name="Valencia A."/>
            <person name="Moran F."/>
            <person name="Moya A."/>
        </authorList>
    </citation>
    <scope>NUCLEOTIDE SEQUENCE [LARGE SCALE GENOMIC DNA]</scope>
    <source>
        <strain>Bp</strain>
    </source>
</reference>
<protein>
    <recommendedName>
        <fullName evidence="1">Histidine--tRNA ligase</fullName>
        <ecNumber evidence="1">6.1.1.21</ecNumber>
    </recommendedName>
    <alternativeName>
        <fullName evidence="1">Histidyl-tRNA synthetase</fullName>
        <shortName evidence="1">HisRS</shortName>
    </alternativeName>
</protein>
<name>SYH_BUCBP</name>
<comment type="catalytic activity">
    <reaction evidence="1">
        <text>tRNA(His) + L-histidine + ATP = L-histidyl-tRNA(His) + AMP + diphosphate + H(+)</text>
        <dbReference type="Rhea" id="RHEA:17313"/>
        <dbReference type="Rhea" id="RHEA-COMP:9665"/>
        <dbReference type="Rhea" id="RHEA-COMP:9689"/>
        <dbReference type="ChEBI" id="CHEBI:15378"/>
        <dbReference type="ChEBI" id="CHEBI:30616"/>
        <dbReference type="ChEBI" id="CHEBI:33019"/>
        <dbReference type="ChEBI" id="CHEBI:57595"/>
        <dbReference type="ChEBI" id="CHEBI:78442"/>
        <dbReference type="ChEBI" id="CHEBI:78527"/>
        <dbReference type="ChEBI" id="CHEBI:456215"/>
        <dbReference type="EC" id="6.1.1.21"/>
    </reaction>
</comment>
<comment type="subunit">
    <text evidence="1">Homodimer.</text>
</comment>
<comment type="subcellular location">
    <subcellularLocation>
        <location evidence="1">Cytoplasm</location>
    </subcellularLocation>
</comment>
<comment type="similarity">
    <text evidence="1">Belongs to the class-II aminoacyl-tRNA synthetase family.</text>
</comment>
<gene>
    <name evidence="1" type="primary">hisS</name>
    <name type="ordered locus">bbp_267</name>
</gene>
<evidence type="ECO:0000255" key="1">
    <source>
        <dbReference type="HAMAP-Rule" id="MF_00127"/>
    </source>
</evidence>
<organism>
    <name type="scientific">Buchnera aphidicola subsp. Baizongia pistaciae (strain Bp)</name>
    <dbReference type="NCBI Taxonomy" id="224915"/>
    <lineage>
        <taxon>Bacteria</taxon>
        <taxon>Pseudomonadati</taxon>
        <taxon>Pseudomonadota</taxon>
        <taxon>Gammaproteobacteria</taxon>
        <taxon>Enterobacterales</taxon>
        <taxon>Erwiniaceae</taxon>
        <taxon>Buchnera</taxon>
    </lineage>
</organism>
<dbReference type="EC" id="6.1.1.21" evidence="1"/>
<dbReference type="EMBL" id="AE016826">
    <property type="protein sequence ID" value="AAO26992.1"/>
    <property type="molecule type" value="Genomic_DNA"/>
</dbReference>
<dbReference type="RefSeq" id="WP_011091393.1">
    <property type="nucleotide sequence ID" value="NC_004545.1"/>
</dbReference>
<dbReference type="SMR" id="P59482"/>
<dbReference type="STRING" id="224915.bbp_267"/>
<dbReference type="KEGG" id="bab:bbp_267"/>
<dbReference type="eggNOG" id="COG0124">
    <property type="taxonomic scope" value="Bacteria"/>
</dbReference>
<dbReference type="HOGENOM" id="CLU_025113_1_1_6"/>
<dbReference type="OrthoDB" id="9800814at2"/>
<dbReference type="Proteomes" id="UP000000601">
    <property type="component" value="Chromosome"/>
</dbReference>
<dbReference type="GO" id="GO:0005737">
    <property type="term" value="C:cytoplasm"/>
    <property type="evidence" value="ECO:0007669"/>
    <property type="project" value="UniProtKB-SubCell"/>
</dbReference>
<dbReference type="GO" id="GO:0005524">
    <property type="term" value="F:ATP binding"/>
    <property type="evidence" value="ECO:0007669"/>
    <property type="project" value="UniProtKB-UniRule"/>
</dbReference>
<dbReference type="GO" id="GO:0004821">
    <property type="term" value="F:histidine-tRNA ligase activity"/>
    <property type="evidence" value="ECO:0007669"/>
    <property type="project" value="UniProtKB-UniRule"/>
</dbReference>
<dbReference type="GO" id="GO:0006427">
    <property type="term" value="P:histidyl-tRNA aminoacylation"/>
    <property type="evidence" value="ECO:0007669"/>
    <property type="project" value="UniProtKB-UniRule"/>
</dbReference>
<dbReference type="CDD" id="cd00773">
    <property type="entry name" value="HisRS-like_core"/>
    <property type="match status" value="1"/>
</dbReference>
<dbReference type="FunFam" id="3.30.930.10:FF:000005">
    <property type="entry name" value="Histidine--tRNA ligase"/>
    <property type="match status" value="1"/>
</dbReference>
<dbReference type="Gene3D" id="3.40.50.800">
    <property type="entry name" value="Anticodon-binding domain"/>
    <property type="match status" value="1"/>
</dbReference>
<dbReference type="Gene3D" id="3.30.930.10">
    <property type="entry name" value="Bira Bifunctional Protein, Domain 2"/>
    <property type="match status" value="1"/>
</dbReference>
<dbReference type="HAMAP" id="MF_00127">
    <property type="entry name" value="His_tRNA_synth"/>
    <property type="match status" value="1"/>
</dbReference>
<dbReference type="InterPro" id="IPR006195">
    <property type="entry name" value="aa-tRNA-synth_II"/>
</dbReference>
<dbReference type="InterPro" id="IPR045864">
    <property type="entry name" value="aa-tRNA-synth_II/BPL/LPL"/>
</dbReference>
<dbReference type="InterPro" id="IPR004154">
    <property type="entry name" value="Anticodon-bd"/>
</dbReference>
<dbReference type="InterPro" id="IPR036621">
    <property type="entry name" value="Anticodon-bd_dom_sf"/>
</dbReference>
<dbReference type="InterPro" id="IPR015807">
    <property type="entry name" value="His-tRNA-ligase"/>
</dbReference>
<dbReference type="InterPro" id="IPR041715">
    <property type="entry name" value="HisRS-like_core"/>
</dbReference>
<dbReference type="InterPro" id="IPR004516">
    <property type="entry name" value="HisRS/HisZ"/>
</dbReference>
<dbReference type="NCBIfam" id="TIGR00442">
    <property type="entry name" value="hisS"/>
    <property type="match status" value="1"/>
</dbReference>
<dbReference type="PANTHER" id="PTHR43707:SF1">
    <property type="entry name" value="HISTIDINE--TRNA LIGASE, MITOCHONDRIAL-RELATED"/>
    <property type="match status" value="1"/>
</dbReference>
<dbReference type="PANTHER" id="PTHR43707">
    <property type="entry name" value="HISTIDYL-TRNA SYNTHETASE"/>
    <property type="match status" value="1"/>
</dbReference>
<dbReference type="Pfam" id="PF03129">
    <property type="entry name" value="HGTP_anticodon"/>
    <property type="match status" value="1"/>
</dbReference>
<dbReference type="Pfam" id="PF13393">
    <property type="entry name" value="tRNA-synt_His"/>
    <property type="match status" value="1"/>
</dbReference>
<dbReference type="PIRSF" id="PIRSF001549">
    <property type="entry name" value="His-tRNA_synth"/>
    <property type="match status" value="1"/>
</dbReference>
<dbReference type="SUPFAM" id="SSF52954">
    <property type="entry name" value="Class II aaRS ABD-related"/>
    <property type="match status" value="1"/>
</dbReference>
<dbReference type="SUPFAM" id="SSF55681">
    <property type="entry name" value="Class II aaRS and biotin synthetases"/>
    <property type="match status" value="1"/>
</dbReference>
<dbReference type="PROSITE" id="PS50862">
    <property type="entry name" value="AA_TRNA_LIGASE_II"/>
    <property type="match status" value="1"/>
</dbReference>
<sequence length="425" mass="49466">MKEIIRSIKGMHDYIPDDVITWQYIEYIVKRILKNYCYNEIRFPLIEKTSLFAHSIGNITDIIEKEMYSFKDKKNKKITLRPEGTIGCMRACINKGLLRTSKQKLWYLGPMFRYERPQHGRYRQFHQFGIEVLGMSGPDIDLEIILLVERILRTLNISNYVQLELNSIGSYESRLHYKKILFSYFKQYEACLDEDCKRRLYVNPLRILDSKDKNIKAIINNAPILMDFIDDNSLIHFENLCKLMKNIGISYVVNYKLVRGLDYYNKTVFEWKTNLLGAKDAICAGGRYDNLSKSLGVTFIPAIGCAIGMERLVLLIKSLKLKPKTNNAIDVFIIFLKDNIQIEAIKLSELVRTQFPKKKIMLSILSSNLRKQFSTANKIKARIVLLLGPNEVKNNLILLKDLTSGYQKSFLKNKIIEELELAFKN</sequence>
<accession>P59482</accession>